<dbReference type="EMBL" id="CP000480">
    <property type="protein sequence ID" value="ABK70994.1"/>
    <property type="molecule type" value="Genomic_DNA"/>
</dbReference>
<dbReference type="EMBL" id="CP001663">
    <property type="protein sequence ID" value="AFP39457.1"/>
    <property type="molecule type" value="Genomic_DNA"/>
</dbReference>
<dbReference type="RefSeq" id="WP_003894457.1">
    <property type="nucleotide sequence ID" value="NZ_SIJM01000002.1"/>
</dbReference>
<dbReference type="RefSeq" id="YP_887386.1">
    <property type="nucleotide sequence ID" value="NC_008596.1"/>
</dbReference>
<dbReference type="SMR" id="A0QWU8"/>
<dbReference type="STRING" id="246196.MSMEG_3070"/>
<dbReference type="PaxDb" id="246196-MSMEI_2993"/>
<dbReference type="KEGG" id="msb:LJ00_15275"/>
<dbReference type="KEGG" id="msg:MSMEI_2993"/>
<dbReference type="KEGG" id="msm:MSMEG_3070"/>
<dbReference type="PATRIC" id="fig|246196.19.peg.3031"/>
<dbReference type="eggNOG" id="ENOG50338Y0">
    <property type="taxonomic scope" value="Bacteria"/>
</dbReference>
<dbReference type="OrthoDB" id="4763237at2"/>
<dbReference type="Proteomes" id="UP000000757">
    <property type="component" value="Chromosome"/>
</dbReference>
<dbReference type="Proteomes" id="UP000006158">
    <property type="component" value="Chromosome"/>
</dbReference>
<dbReference type="GO" id="GO:0005576">
    <property type="term" value="C:extracellular region"/>
    <property type="evidence" value="ECO:0007669"/>
    <property type="project" value="UniProtKB-KW"/>
</dbReference>
<dbReference type="GO" id="GO:0005886">
    <property type="term" value="C:plasma membrane"/>
    <property type="evidence" value="ECO:0007669"/>
    <property type="project" value="UniProtKB-SubCell"/>
</dbReference>
<dbReference type="GO" id="GO:0008289">
    <property type="term" value="F:lipid binding"/>
    <property type="evidence" value="ECO:0007669"/>
    <property type="project" value="UniProtKB-KW"/>
</dbReference>
<dbReference type="GO" id="GO:0006869">
    <property type="term" value="P:lipid transport"/>
    <property type="evidence" value="ECO:0007669"/>
    <property type="project" value="UniProtKB-KW"/>
</dbReference>
<dbReference type="GO" id="GO:0046677">
    <property type="term" value="P:response to antibiotic"/>
    <property type="evidence" value="ECO:0007669"/>
    <property type="project" value="UniProtKB-KW"/>
</dbReference>
<dbReference type="CDD" id="cd16334">
    <property type="entry name" value="LppX-like"/>
    <property type="match status" value="1"/>
</dbReference>
<dbReference type="Gene3D" id="2.50.20.20">
    <property type="match status" value="1"/>
</dbReference>
<dbReference type="InterPro" id="IPR029046">
    <property type="entry name" value="LolA/LolB/LppX"/>
</dbReference>
<dbReference type="InterPro" id="IPR009830">
    <property type="entry name" value="LppX/LprAFG"/>
</dbReference>
<dbReference type="Pfam" id="PF07161">
    <property type="entry name" value="LppX_LprAFG"/>
    <property type="match status" value="1"/>
</dbReference>
<dbReference type="SUPFAM" id="SSF89392">
    <property type="entry name" value="Prokaryotic lipoproteins and lipoprotein localization factors"/>
    <property type="match status" value="1"/>
</dbReference>
<dbReference type="PROSITE" id="PS51257">
    <property type="entry name" value="PROKAR_LIPOPROTEIN"/>
    <property type="match status" value="1"/>
</dbReference>
<keyword id="KW-0046">Antibiotic resistance</keyword>
<keyword id="KW-0997">Cell inner membrane</keyword>
<keyword id="KW-1003">Cell membrane</keyword>
<keyword id="KW-0134">Cell wall</keyword>
<keyword id="KW-0445">Lipid transport</keyword>
<keyword id="KW-0446">Lipid-binding</keyword>
<keyword id="KW-0449">Lipoprotein</keyword>
<keyword id="KW-0472">Membrane</keyword>
<keyword id="KW-0564">Palmitate</keyword>
<keyword id="KW-1185">Reference proteome</keyword>
<keyword id="KW-0964">Secreted</keyword>
<keyword id="KW-0732">Signal</keyword>
<keyword id="KW-0813">Transport</keyword>
<feature type="signal peptide" evidence="2">
    <location>
        <begin position="1"/>
        <end position="25"/>
    </location>
</feature>
<feature type="chain" id="PRO_5007633152" description="Lipoarabinomannan carrier protein LprG" evidence="2">
    <location>
        <begin position="26"/>
        <end position="236"/>
    </location>
</feature>
<feature type="lipid moiety-binding region" description="N-palmitoyl cysteine" evidence="2">
    <location>
        <position position="26"/>
    </location>
</feature>
<feature type="lipid moiety-binding region" description="S-diacylglycerol cysteine" evidence="2">
    <location>
        <position position="26"/>
    </location>
</feature>
<sequence length="236" mass="24108">MQTRPRFAVQSLFAILATAAALVAGCSSSSETSDAPLPDGAALLQESASKTKTQQSVHLLLTVQGKVDGLPVEKLDGDLTNAPAVAAEGTADLIAFGQKIADAKFVIADGNLYAALTPGDPLSNYGAAANIYDVSAILNPDTGLANVLANFSDATADGRESINGTEAVRVKGNVSADAVNKIAPALKADGPVPGTAWITEDDHTLLQAQLEPTPGNSVTMTLSDWGKQVNVTKPAA</sequence>
<organism>
    <name type="scientific">Mycolicibacterium smegmatis (strain ATCC 700084 / mc(2)155)</name>
    <name type="common">Mycobacterium smegmatis</name>
    <dbReference type="NCBI Taxonomy" id="246196"/>
    <lineage>
        <taxon>Bacteria</taxon>
        <taxon>Bacillati</taxon>
        <taxon>Actinomycetota</taxon>
        <taxon>Actinomycetes</taxon>
        <taxon>Mycobacteriales</taxon>
        <taxon>Mycobacteriaceae</taxon>
        <taxon>Mycolicibacterium</taxon>
    </lineage>
</organism>
<reference key="1">
    <citation type="submission" date="2006-10" db="EMBL/GenBank/DDBJ databases">
        <authorList>
            <person name="Fleischmann R.D."/>
            <person name="Dodson R.J."/>
            <person name="Haft D.H."/>
            <person name="Merkel J.S."/>
            <person name="Nelson W.C."/>
            <person name="Fraser C.M."/>
        </authorList>
    </citation>
    <scope>NUCLEOTIDE SEQUENCE [LARGE SCALE GENOMIC DNA]</scope>
    <source>
        <strain>ATCC 700084 / mc(2)155</strain>
    </source>
</reference>
<reference key="2">
    <citation type="journal article" date="2007" name="Genome Biol.">
        <title>Interrupted coding sequences in Mycobacterium smegmatis: authentic mutations or sequencing errors?</title>
        <authorList>
            <person name="Deshayes C."/>
            <person name="Perrodou E."/>
            <person name="Gallien S."/>
            <person name="Euphrasie D."/>
            <person name="Schaeffer C."/>
            <person name="Van-Dorsselaer A."/>
            <person name="Poch O."/>
            <person name="Lecompte O."/>
            <person name="Reyrat J.-M."/>
        </authorList>
    </citation>
    <scope>NUCLEOTIDE SEQUENCE [LARGE SCALE GENOMIC DNA]</scope>
    <source>
        <strain>ATCC 700084 / mc(2)155</strain>
    </source>
</reference>
<reference key="3">
    <citation type="journal article" date="2009" name="Genome Res.">
        <title>Ortho-proteogenomics: multiple proteomes investigation through orthology and a new MS-based protocol.</title>
        <authorList>
            <person name="Gallien S."/>
            <person name="Perrodou E."/>
            <person name="Carapito C."/>
            <person name="Deshayes C."/>
            <person name="Reyrat J.-M."/>
            <person name="Van Dorsselaer A."/>
            <person name="Poch O."/>
            <person name="Schaeffer C."/>
            <person name="Lecompte O."/>
        </authorList>
    </citation>
    <scope>NUCLEOTIDE SEQUENCE [LARGE SCALE GENOMIC DNA]</scope>
    <source>
        <strain>ATCC 700084 / mc(2)155</strain>
    </source>
</reference>
<reference key="4">
    <citation type="journal article" date="2008" name="J. Bacteriol.">
        <title>Function of a mycobacterial major facilitator superfamily pump requires a membrane-associated lipoprotein.</title>
        <authorList>
            <person name="Farrow M.F."/>
            <person name="Rubin E.J."/>
        </authorList>
    </citation>
    <scope>FUNCTION</scope>
    <scope>OPERON STRUCTURE</scope>
    <scope>DISRUPTION PHENOTYPE</scope>
    <source>
        <strain>ATCC 700084 / mc(2)155</strain>
    </source>
</reference>
<reference key="5">
    <citation type="journal article" date="2017" name="ACS Infect. Dis.">
        <title>A Screen for Protein-Protein Interactions in Live Mycobacteria Reveals a Functional Link between the Virulence-Associated Lipid Transporter LprG and the Mycolyltransferase Antigen 85A.</title>
        <authorList>
            <person name="Touchette M.H."/>
            <person name="Van Vlack E.R."/>
            <person name="Bai L."/>
            <person name="Kim J."/>
            <person name="Cognetta A.B. III"/>
            <person name="Previti M.L."/>
            <person name="Backus K.M."/>
            <person name="Martin D.W."/>
            <person name="Cravatt B.F."/>
            <person name="Seeliger J.C."/>
        </authorList>
    </citation>
    <scope>SUBUNIT</scope>
    <scope>SUBCELLULAR LOCATION</scope>
    <scope>INTERACTION WITH ITSELF; AG85A; LPPI AND LPPK</scope>
    <scope>DISRUPTION PHENOTYPE</scope>
    <source>
        <strain>ATCC 700084 / mc(2)155</strain>
    </source>
</reference>
<reference key="6">
    <citation type="journal article" date="2019" name="Mol. Microbiol.">
        <title>Increased drug permeability of a stiffened mycobacterial outer membrane in cells lacking MFS transporter Rv1410 and lipoprotein LprG.</title>
        <authorList>
            <person name="Hohl M."/>
            <person name="Remm S."/>
            <person name="Eskandarian H.A."/>
            <person name="Dal Molin M."/>
            <person name="Arnold F.M."/>
            <person name="Huerlimann L.M."/>
            <person name="Kruegel A."/>
            <person name="Fantner G.E."/>
            <person name="Sander P."/>
            <person name="Seeger M.A."/>
        </authorList>
    </citation>
    <scope>OPERON STRUCTURE</scope>
    <scope>DISRUPTION PHENOTYPE</scope>
    <source>
        <strain>ATCC 700084 / mc(2)155</strain>
    </source>
</reference>
<accession>A0QWU8</accession>
<protein>
    <recommendedName>
        <fullName evidence="1">Lipoarabinomannan carrier protein LprG</fullName>
    </recommendedName>
    <alternativeName>
        <fullName>27 kDa lipoprotein</fullName>
    </alternativeName>
    <alternativeName>
        <fullName>Antigen P27</fullName>
    </alternativeName>
    <alternativeName>
        <fullName evidence="6">Lipoprotein LprG</fullName>
    </alternativeName>
    <alternativeName>
        <fullName>Triacylated glycolipid carrier LprG</fullName>
    </alternativeName>
    <alternativeName>
        <fullName>Triacylglyceride transfer protein LprG</fullName>
    </alternativeName>
</protein>
<evidence type="ECO:0000250" key="1">
    <source>
        <dbReference type="UniProtKB" id="P9WK45"/>
    </source>
</evidence>
<evidence type="ECO:0000255" key="2">
    <source>
        <dbReference type="PROSITE-ProRule" id="PRU00303"/>
    </source>
</evidence>
<evidence type="ECO:0000269" key="3">
    <source>
    </source>
</evidence>
<evidence type="ECO:0000269" key="4">
    <source>
    </source>
</evidence>
<evidence type="ECO:0000269" key="5">
    <source>
    </source>
</evidence>
<evidence type="ECO:0000303" key="6">
    <source>
    </source>
</evidence>
<evidence type="ECO:0000305" key="7"/>
<evidence type="ECO:0000305" key="8">
    <source>
    </source>
</evidence>
<proteinExistence type="evidence at protein level"/>
<gene>
    <name evidence="6" type="primary">lprG</name>
    <name type="ordered locus">MSMEG_3070</name>
    <name type="ordered locus">MSMEI_2993</name>
</gene>
<comment type="function">
    <text evidence="1 3 4">Helps membrane protein MSMEG_3069/MSMEI_2992 (P55) transport triacylglycerides (TAG) across the inner cell membrane into the periplasm and probably ultimately to the outer membrane (By similarity). Binds TAG in its hydrophobic cavity and transfers it between lipid bilayers (By similarity). TAG probably regulates lipid metabolism and growth regulation and plays a structural role in the outer membrane (By similarity). Also binds mannosides, lipoarabinomannan and lipomannan and various glycolipids in the same cavity (By similarity). Required for MSMEG_3069/MSMEI_2992 export activity. Export of ethidium bromide by MSMEG_3069/MSMEI_2992 can be complemented by the equivalent operon from M.tuberculosis (lprG-Rv1410c) (PubMed:18156250). Involved in mycolylation (PubMed:28276676).</text>
</comment>
<comment type="subunit">
    <text evidence="4">Interacts with itself, Ag85A (MSMEG_6398), LppI (MSMEG_3851) and LppK (MSMEG_3904) in vivo (PubMed:28276676).</text>
</comment>
<comment type="subcellular location">
    <subcellularLocation>
        <location evidence="2 7">Cell inner membrane</location>
        <topology evidence="2">Lipid-anchor</topology>
        <orientation evidence="7">Periplasmic side</orientation>
    </subcellularLocation>
    <subcellularLocation>
        <location evidence="8">Secreted</location>
        <location evidence="8">Cell wall</location>
    </subcellularLocation>
</comment>
<comment type="induction">
    <text evidence="3 5">Part of the lrpG-MSMEG_3069/MSMEI_2992 operon (PubMed:18156250, PubMed:30742339).</text>
</comment>
<comment type="domain">
    <text evidence="1">Forms a U-shaped beta-half-barrel with a small hydrophobic cavity able to hold a triacylated lipid or triacylglyceride (By similarity). A flexible lid region may move to accommodate different TAG molecules (By similarity).</text>
</comment>
<comment type="disruption phenotype">
    <text evidence="3 4 5">A single lprG deletion shows reduced incorporation of trehalose monomycolate analog O-AlkTMM and increased incorporation of analog N-AlkTMM (PubMed:28276676). Double deletions of the lprG-MSMEG_3069/MSMEI_2992 operon are more sensitive to ethidium bromide; restoration of wild-type growth is conferred by the M.tuberculosis operon (PubMed:18156250). Cells display abnormal colony morphology and are defective for sliding motility under carbon-limiting conditions (PubMed:18156250). A double lprG-MSMEG_3069/MSMEI_2992 deletion strain is more sensitive to the antibiotics tetracyline, vancomycin, rifabutin and novobiocin, has a higher mean surface rigidity, and has a cell separation defect (PubMed:30742339).</text>
</comment>
<comment type="similarity">
    <text evidence="7">Belongs to the LppX/LprAFG lipoprotein family.</text>
</comment>
<name>LPRG_MYCS2</name>